<comment type="function">
    <text evidence="1">Bifunctional enzyme that catalyzes the formation of 4-diphosphocytidyl-2-C-methyl-D-erythritol from CTP and 2-C-methyl-D-erythritol 4-phosphate (MEP) (IspD), and catalyzes the conversion of 4-diphosphocytidyl-2-C-methyl-D-erythritol 2-phosphate (CDP-ME2P) to 2-C-methyl-D-erythritol 2,4-cyclodiphosphate (ME-CPP) with a corresponding release of cytidine 5-monophosphate (CMP) (IspF).</text>
</comment>
<comment type="catalytic activity">
    <reaction evidence="1">
        <text>2-C-methyl-D-erythritol 4-phosphate + CTP + H(+) = 4-CDP-2-C-methyl-D-erythritol + diphosphate</text>
        <dbReference type="Rhea" id="RHEA:13429"/>
        <dbReference type="ChEBI" id="CHEBI:15378"/>
        <dbReference type="ChEBI" id="CHEBI:33019"/>
        <dbReference type="ChEBI" id="CHEBI:37563"/>
        <dbReference type="ChEBI" id="CHEBI:57823"/>
        <dbReference type="ChEBI" id="CHEBI:58262"/>
        <dbReference type="EC" id="2.7.7.60"/>
    </reaction>
</comment>
<comment type="catalytic activity">
    <reaction evidence="1">
        <text>4-CDP-2-C-methyl-D-erythritol 2-phosphate = 2-C-methyl-D-erythritol 2,4-cyclic diphosphate + CMP</text>
        <dbReference type="Rhea" id="RHEA:23864"/>
        <dbReference type="ChEBI" id="CHEBI:57919"/>
        <dbReference type="ChEBI" id="CHEBI:58483"/>
        <dbReference type="ChEBI" id="CHEBI:60377"/>
        <dbReference type="EC" id="4.6.1.12"/>
    </reaction>
</comment>
<comment type="cofactor">
    <cofactor evidence="1">
        <name>a divalent metal cation</name>
        <dbReference type="ChEBI" id="CHEBI:60240"/>
    </cofactor>
</comment>
<comment type="pathway">
    <text evidence="1">Isoprenoid biosynthesis; isopentenyl diphosphate biosynthesis via DXP pathway; isopentenyl diphosphate from 1-deoxy-D-xylulose 5-phosphate: step 2/6.</text>
</comment>
<comment type="pathway">
    <text evidence="1">Isoprenoid biosynthesis; isopentenyl diphosphate biosynthesis via DXP pathway; isopentenyl diphosphate from 1-deoxy-D-xylulose 5-phosphate: step 4/6.</text>
</comment>
<comment type="similarity">
    <text evidence="1">In the N-terminal section; belongs to the IspD/TarI cytidylyltransferase family. IspD subfamily.</text>
</comment>
<comment type="similarity">
    <text evidence="1">In the C-terminal section; belongs to the IspF family.</text>
</comment>
<protein>
    <recommendedName>
        <fullName evidence="1">Bifunctional enzyme IspD/IspF</fullName>
    </recommendedName>
    <domain>
        <recommendedName>
            <fullName evidence="1">2-C-methyl-D-erythritol 4-phosphate cytidylyltransferase</fullName>
            <ecNumber evidence="1">2.7.7.60</ecNumber>
        </recommendedName>
        <alternativeName>
            <fullName evidence="1">4-diphosphocytidyl-2C-methyl-D-erythritol synthase</fullName>
        </alternativeName>
        <alternativeName>
            <fullName evidence="1">MEP cytidylyltransferase</fullName>
            <shortName evidence="1">MCT</shortName>
        </alternativeName>
    </domain>
    <domain>
        <recommendedName>
            <fullName evidence="1">2-C-methyl-D-erythritol 2,4-cyclodiphosphate synthase</fullName>
            <shortName evidence="1">MECDP-synthase</shortName>
            <shortName evidence="1">MECPP-synthase</shortName>
            <shortName evidence="1">MECPS</shortName>
            <ecNumber evidence="1">4.6.1.12</ecNumber>
        </recommendedName>
    </domain>
</protein>
<gene>
    <name evidence="1" type="primary">ispDF</name>
    <name type="ordered locus">RPB_2885</name>
</gene>
<reference key="1">
    <citation type="submission" date="2006-01" db="EMBL/GenBank/DDBJ databases">
        <title>Complete sequence of Rhodopseudomonas palustris HaA2.</title>
        <authorList>
            <consortium name="US DOE Joint Genome Institute"/>
            <person name="Copeland A."/>
            <person name="Lucas S."/>
            <person name="Lapidus A."/>
            <person name="Barry K."/>
            <person name="Detter J.C."/>
            <person name="Glavina T."/>
            <person name="Hammon N."/>
            <person name="Israni S."/>
            <person name="Pitluck S."/>
            <person name="Chain P."/>
            <person name="Malfatti S."/>
            <person name="Shin M."/>
            <person name="Vergez L."/>
            <person name="Schmutz J."/>
            <person name="Larimer F."/>
            <person name="Land M."/>
            <person name="Hauser L."/>
            <person name="Pelletier D.A."/>
            <person name="Kyrpides N."/>
            <person name="Anderson I."/>
            <person name="Oda Y."/>
            <person name="Harwood C.S."/>
            <person name="Richardson P."/>
        </authorList>
    </citation>
    <scope>NUCLEOTIDE SEQUENCE [LARGE SCALE GENOMIC DNA]</scope>
    <source>
        <strain>HaA2</strain>
    </source>
</reference>
<sequence>MQKPPRTAAIIVAAGRGLRAGAGGPKQYRTLAGRPVIARALQPFCTHPEVFAVQPVTNPDDTATFNEAVAGLDFRPAVGGGATRQASVRAGLEALAELNPDIVLIHDAARPFVTPDLISRAIVAAGQTGAALPVIAVNDTVKQVDAEGCVVATPDRAQLRIAQTPQAFRFDVILDAHRRAARDGRDDFTDDAAIAEWAGLTVSTFEGDAANMKLTTPEDFSREESRLTAALGDIRTGTGYDVHAFGDGDHVWLCGLKVPHNRGFLAHSDGDVGLHALVDAILGALADGDIGSHFPPTDPQWKGAASDKFLKYAVDRVAARGGRIANLEVTMICERPKIGPLRDPMRQRIAEITGVPVSRVAVKATTSERLGFTGREEGIAATASATIRLPWSPWGAEGQAS</sequence>
<organism>
    <name type="scientific">Rhodopseudomonas palustris (strain HaA2)</name>
    <dbReference type="NCBI Taxonomy" id="316058"/>
    <lineage>
        <taxon>Bacteria</taxon>
        <taxon>Pseudomonadati</taxon>
        <taxon>Pseudomonadota</taxon>
        <taxon>Alphaproteobacteria</taxon>
        <taxon>Hyphomicrobiales</taxon>
        <taxon>Nitrobacteraceae</taxon>
        <taxon>Rhodopseudomonas</taxon>
    </lineage>
</organism>
<evidence type="ECO:0000255" key="1">
    <source>
        <dbReference type="HAMAP-Rule" id="MF_01520"/>
    </source>
</evidence>
<feature type="chain" id="PRO_0000296756" description="Bifunctional enzyme IspD/IspF">
    <location>
        <begin position="1"/>
        <end position="401"/>
    </location>
</feature>
<feature type="region of interest" description="2-C-methyl-D-erythritol 4-phosphate cytidylyltransferase" evidence="1">
    <location>
        <begin position="1"/>
        <end position="234"/>
    </location>
</feature>
<feature type="region of interest" description="2-C-methyl-D-erythritol 2,4-cyclodiphosphate synthase" evidence="1">
    <location>
        <begin position="235"/>
        <end position="401"/>
    </location>
</feature>
<feature type="binding site" evidence="1">
    <location>
        <begin position="241"/>
        <end position="243"/>
    </location>
    <ligand>
        <name>4-CDP-2-C-methyl-D-erythritol 2-phosphate</name>
        <dbReference type="ChEBI" id="CHEBI:57919"/>
    </ligand>
</feature>
<feature type="binding site" evidence="1">
    <location>
        <position position="241"/>
    </location>
    <ligand>
        <name>a divalent metal cation</name>
        <dbReference type="ChEBI" id="CHEBI:60240"/>
    </ligand>
</feature>
<feature type="binding site" evidence="1">
    <location>
        <position position="243"/>
    </location>
    <ligand>
        <name>a divalent metal cation</name>
        <dbReference type="ChEBI" id="CHEBI:60240"/>
    </ligand>
</feature>
<feature type="binding site" evidence="1">
    <location>
        <begin position="267"/>
        <end position="268"/>
    </location>
    <ligand>
        <name>4-CDP-2-C-methyl-D-erythritol 2-phosphate</name>
        <dbReference type="ChEBI" id="CHEBI:57919"/>
    </ligand>
</feature>
<feature type="binding site" evidence="1">
    <location>
        <position position="275"/>
    </location>
    <ligand>
        <name>a divalent metal cation</name>
        <dbReference type="ChEBI" id="CHEBI:60240"/>
    </ligand>
</feature>
<feature type="binding site" evidence="1">
    <location>
        <begin position="289"/>
        <end position="291"/>
    </location>
    <ligand>
        <name>4-CDP-2-C-methyl-D-erythritol 2-phosphate</name>
        <dbReference type="ChEBI" id="CHEBI:57919"/>
    </ligand>
</feature>
<feature type="binding site" evidence="1">
    <location>
        <begin position="365"/>
        <end position="368"/>
    </location>
    <ligand>
        <name>4-CDP-2-C-methyl-D-erythritol 2-phosphate</name>
        <dbReference type="ChEBI" id="CHEBI:57919"/>
    </ligand>
</feature>
<feature type="binding site" evidence="1">
    <location>
        <position position="372"/>
    </location>
    <ligand>
        <name>4-CDP-2-C-methyl-D-erythritol 2-phosphate</name>
        <dbReference type="ChEBI" id="CHEBI:57919"/>
    </ligand>
</feature>
<feature type="binding site" evidence="1">
    <location>
        <position position="375"/>
    </location>
    <ligand>
        <name>4-CDP-2-C-methyl-D-erythritol 2-phosphate</name>
        <dbReference type="ChEBI" id="CHEBI:57919"/>
    </ligand>
</feature>
<feature type="site" description="Transition state stabilizer" evidence="1">
    <location>
        <position position="19"/>
    </location>
</feature>
<feature type="site" description="Transition state stabilizer" evidence="1">
    <location>
        <position position="26"/>
    </location>
</feature>
<feature type="site" description="Positions MEP for the nucleophilic attack" evidence="1">
    <location>
        <position position="156"/>
    </location>
</feature>
<feature type="site" description="Positions MEP for the nucleophilic attack" evidence="1">
    <location>
        <position position="213"/>
    </location>
</feature>
<feature type="site" description="Transition state stabilizer" evidence="1">
    <location>
        <position position="267"/>
    </location>
</feature>
<feature type="site" description="Transition state stabilizer" evidence="1">
    <location>
        <position position="366"/>
    </location>
</feature>
<name>ISPDF_RHOP2</name>
<proteinExistence type="inferred from homology"/>
<keyword id="KW-0414">Isoprene biosynthesis</keyword>
<keyword id="KW-0456">Lyase</keyword>
<keyword id="KW-0479">Metal-binding</keyword>
<keyword id="KW-0511">Multifunctional enzyme</keyword>
<keyword id="KW-0548">Nucleotidyltransferase</keyword>
<keyword id="KW-1185">Reference proteome</keyword>
<keyword id="KW-0808">Transferase</keyword>
<accession>Q2IW23</accession>
<dbReference type="EC" id="2.7.7.60" evidence="1"/>
<dbReference type="EC" id="4.6.1.12" evidence="1"/>
<dbReference type="EMBL" id="CP000250">
    <property type="protein sequence ID" value="ABD07587.1"/>
    <property type="molecule type" value="Genomic_DNA"/>
</dbReference>
<dbReference type="RefSeq" id="WP_011441771.1">
    <property type="nucleotide sequence ID" value="NC_007778.1"/>
</dbReference>
<dbReference type="SMR" id="Q2IW23"/>
<dbReference type="STRING" id="316058.RPB_2885"/>
<dbReference type="KEGG" id="rpb:RPB_2885"/>
<dbReference type="eggNOG" id="COG0245">
    <property type="taxonomic scope" value="Bacteria"/>
</dbReference>
<dbReference type="eggNOG" id="COG1211">
    <property type="taxonomic scope" value="Bacteria"/>
</dbReference>
<dbReference type="HOGENOM" id="CLU_042800_0_1_5"/>
<dbReference type="OrthoDB" id="9804336at2"/>
<dbReference type="UniPathway" id="UPA00056">
    <property type="reaction ID" value="UER00093"/>
</dbReference>
<dbReference type="UniPathway" id="UPA00056">
    <property type="reaction ID" value="UER00095"/>
</dbReference>
<dbReference type="Proteomes" id="UP000008809">
    <property type="component" value="Chromosome"/>
</dbReference>
<dbReference type="GO" id="GO:0008685">
    <property type="term" value="F:2-C-methyl-D-erythritol 2,4-cyclodiphosphate synthase activity"/>
    <property type="evidence" value="ECO:0007669"/>
    <property type="project" value="UniProtKB-UniRule"/>
</dbReference>
<dbReference type="GO" id="GO:0050518">
    <property type="term" value="F:2-C-methyl-D-erythritol 4-phosphate cytidylyltransferase activity"/>
    <property type="evidence" value="ECO:0007669"/>
    <property type="project" value="UniProtKB-UniRule"/>
</dbReference>
<dbReference type="GO" id="GO:0046872">
    <property type="term" value="F:metal ion binding"/>
    <property type="evidence" value="ECO:0007669"/>
    <property type="project" value="UniProtKB-KW"/>
</dbReference>
<dbReference type="GO" id="GO:0019288">
    <property type="term" value="P:isopentenyl diphosphate biosynthetic process, methylerythritol 4-phosphate pathway"/>
    <property type="evidence" value="ECO:0007669"/>
    <property type="project" value="UniProtKB-UniRule"/>
</dbReference>
<dbReference type="GO" id="GO:0016114">
    <property type="term" value="P:terpenoid biosynthetic process"/>
    <property type="evidence" value="ECO:0007669"/>
    <property type="project" value="InterPro"/>
</dbReference>
<dbReference type="CDD" id="cd02516">
    <property type="entry name" value="CDP-ME_synthetase"/>
    <property type="match status" value="1"/>
</dbReference>
<dbReference type="CDD" id="cd00554">
    <property type="entry name" value="MECDP_synthase"/>
    <property type="match status" value="1"/>
</dbReference>
<dbReference type="FunFam" id="3.90.550.10:FF:000003">
    <property type="entry name" value="2-C-methyl-D-erythritol 4-phosphate cytidylyltransferase"/>
    <property type="match status" value="1"/>
</dbReference>
<dbReference type="Gene3D" id="3.30.1330.50">
    <property type="entry name" value="2-C-methyl-D-erythritol 2,4-cyclodiphosphate synthase"/>
    <property type="match status" value="1"/>
</dbReference>
<dbReference type="Gene3D" id="3.90.550.10">
    <property type="entry name" value="Spore Coat Polysaccharide Biosynthesis Protein SpsA, Chain A"/>
    <property type="match status" value="1"/>
</dbReference>
<dbReference type="HAMAP" id="MF_00108">
    <property type="entry name" value="IspD"/>
    <property type="match status" value="1"/>
</dbReference>
<dbReference type="HAMAP" id="MF_01520">
    <property type="entry name" value="IspDF"/>
    <property type="match status" value="1"/>
</dbReference>
<dbReference type="HAMAP" id="MF_00107">
    <property type="entry name" value="IspF"/>
    <property type="match status" value="1"/>
</dbReference>
<dbReference type="InterPro" id="IPR001228">
    <property type="entry name" value="IspD"/>
</dbReference>
<dbReference type="InterPro" id="IPR026596">
    <property type="entry name" value="IspD/F"/>
</dbReference>
<dbReference type="InterPro" id="IPR034683">
    <property type="entry name" value="IspD/TarI"/>
</dbReference>
<dbReference type="InterPro" id="IPR018294">
    <property type="entry name" value="ISPD_synthase_CS"/>
</dbReference>
<dbReference type="InterPro" id="IPR003526">
    <property type="entry name" value="MECDP_synthase"/>
</dbReference>
<dbReference type="InterPro" id="IPR020555">
    <property type="entry name" value="MECDP_synthase_CS"/>
</dbReference>
<dbReference type="InterPro" id="IPR036571">
    <property type="entry name" value="MECDP_synthase_sf"/>
</dbReference>
<dbReference type="InterPro" id="IPR029044">
    <property type="entry name" value="Nucleotide-diphossugar_trans"/>
</dbReference>
<dbReference type="NCBIfam" id="TIGR00453">
    <property type="entry name" value="ispD"/>
    <property type="match status" value="1"/>
</dbReference>
<dbReference type="NCBIfam" id="TIGR00151">
    <property type="entry name" value="ispF"/>
    <property type="match status" value="1"/>
</dbReference>
<dbReference type="NCBIfam" id="NF006899">
    <property type="entry name" value="PRK09382.1"/>
    <property type="match status" value="1"/>
</dbReference>
<dbReference type="PANTHER" id="PTHR43181">
    <property type="entry name" value="2-C-METHYL-D-ERYTHRITOL 2,4-CYCLODIPHOSPHATE SYNTHASE, CHLOROPLASTIC"/>
    <property type="match status" value="1"/>
</dbReference>
<dbReference type="PANTHER" id="PTHR43181:SF1">
    <property type="entry name" value="2-C-METHYL-D-ERYTHRITOL 2,4-CYCLODIPHOSPHATE SYNTHASE, CHLOROPLASTIC"/>
    <property type="match status" value="1"/>
</dbReference>
<dbReference type="Pfam" id="PF01128">
    <property type="entry name" value="IspD"/>
    <property type="match status" value="1"/>
</dbReference>
<dbReference type="Pfam" id="PF02542">
    <property type="entry name" value="YgbB"/>
    <property type="match status" value="1"/>
</dbReference>
<dbReference type="SUPFAM" id="SSF69765">
    <property type="entry name" value="IpsF-like"/>
    <property type="match status" value="1"/>
</dbReference>
<dbReference type="SUPFAM" id="SSF53448">
    <property type="entry name" value="Nucleotide-diphospho-sugar transferases"/>
    <property type="match status" value="1"/>
</dbReference>
<dbReference type="PROSITE" id="PS01295">
    <property type="entry name" value="ISPD"/>
    <property type="match status" value="1"/>
</dbReference>
<dbReference type="PROSITE" id="PS01350">
    <property type="entry name" value="ISPF"/>
    <property type="match status" value="1"/>
</dbReference>